<organism>
    <name type="scientific">Caulobacter vibrioides (strain ATCC 19089 / CIP 103742 / CB 15)</name>
    <name type="common">Caulobacter crescentus</name>
    <dbReference type="NCBI Taxonomy" id="190650"/>
    <lineage>
        <taxon>Bacteria</taxon>
        <taxon>Pseudomonadati</taxon>
        <taxon>Pseudomonadota</taxon>
        <taxon>Alphaproteobacteria</taxon>
        <taxon>Caulobacterales</taxon>
        <taxon>Caulobacteraceae</taxon>
        <taxon>Caulobacter</taxon>
    </lineage>
</organism>
<keyword id="KW-0963">Cytoplasm</keyword>
<keyword id="KW-0274">FAD</keyword>
<keyword id="KW-0285">Flavoprotein</keyword>
<keyword id="KW-0520">NAD</keyword>
<keyword id="KW-1185">Reference proteome</keyword>
<keyword id="KW-0819">tRNA processing</keyword>
<protein>
    <recommendedName>
        <fullName evidence="1">tRNA uridine 5-carboxymethylaminomethyl modification enzyme MnmG</fullName>
    </recommendedName>
    <alternativeName>
        <fullName evidence="1">Glucose-inhibited division protein A</fullName>
    </alternativeName>
</protein>
<evidence type="ECO:0000255" key="1">
    <source>
        <dbReference type="HAMAP-Rule" id="MF_00129"/>
    </source>
</evidence>
<evidence type="ECO:0000305" key="2"/>
<sequence length="618" mass="67169">MSKSWDVIVIGGGHAGCEAAAASARAGARTLLLTHKLETIGEMSCNPAIGGLGKGHLVREIDALDGVMGRMADKAGIQFRMLNRSKGPAVRGPRSQIDRRLYREAMQAELFSTGNLDIIAAAAEDLIVEDGKVAGAVDAAGQAYRAPRVILTTGTFLKGVIHRGEDRIPAGRVGDQPAIGLSDRLYGLGFQMGRLKTGTPARLDGKTIAWDRLESQAADDTPVPFSYLNHRIDVPQIACGVTYTTEETHRIIAERIGESLVYSGRATGVGPRYCPSIEDKVVRFADKTSHQIFLEPEGLDDDTVYPNGISTSVSEETQLLFLRTIPGLEQVEVIRYGYAIEYDYVDPRELYPTLETKRLPGLYLAGQINGTTGYEEAGAQGLVAGLNAALAVQGREPAIFARDEAYIGVMIDDLVTRGVTEPYRMFTSRAEFRLTLRADNADQRLSDRGISLGVVGPVRAAAWTEKKARLDAARAFARSVTLTPNEAVKAGFKVNSDGVRRDVFAMLAYPDVTLDDLGRIWPEVFTWNTDVREQIEIEAAYAGYLDRQRADAESLRKDEDLRLPADLDYAEIGSLSNEVRGKLARVRPLTLGQAARIEGVTPGALTALLAHVRRGRAA</sequence>
<proteinExistence type="inferred from homology"/>
<feature type="chain" id="PRO_0000117080" description="tRNA uridine 5-carboxymethylaminomethyl modification enzyme MnmG">
    <location>
        <begin position="1"/>
        <end position="618"/>
    </location>
</feature>
<feature type="binding site" evidence="1">
    <location>
        <begin position="11"/>
        <end position="16"/>
    </location>
    <ligand>
        <name>FAD</name>
        <dbReference type="ChEBI" id="CHEBI:57692"/>
    </ligand>
</feature>
<feature type="binding site" evidence="1">
    <location>
        <begin position="270"/>
        <end position="284"/>
    </location>
    <ligand>
        <name>NAD(+)</name>
        <dbReference type="ChEBI" id="CHEBI:57540"/>
    </ligand>
</feature>
<comment type="function">
    <text evidence="1">NAD-binding protein involved in the addition of a carboxymethylaminomethyl (cmnm) group at the wobble position (U34) of certain tRNAs, forming tRNA-cmnm(5)s(2)U34.</text>
</comment>
<comment type="cofactor">
    <cofactor evidence="1">
        <name>FAD</name>
        <dbReference type="ChEBI" id="CHEBI:57692"/>
    </cofactor>
</comment>
<comment type="subunit">
    <text evidence="1">Homodimer. Heterotetramer of two MnmE and two MnmG subunits.</text>
</comment>
<comment type="subcellular location">
    <subcellularLocation>
        <location evidence="1">Cytoplasm</location>
    </subcellularLocation>
</comment>
<comment type="similarity">
    <text evidence="1">Belongs to the MnmG family.</text>
</comment>
<comment type="sequence caution" evidence="2">
    <conflict type="erroneous initiation">
        <sequence resource="EMBL-CDS" id="AAK25717"/>
    </conflict>
</comment>
<dbReference type="EMBL" id="AE005673">
    <property type="protein sequence ID" value="AAK25717.1"/>
    <property type="status" value="ALT_INIT"/>
    <property type="molecule type" value="Genomic_DNA"/>
</dbReference>
<dbReference type="PIR" id="A87715">
    <property type="entry name" value="A87715"/>
</dbReference>
<dbReference type="RefSeq" id="NP_422549.1">
    <property type="nucleotide sequence ID" value="NC_002696.2"/>
</dbReference>
<dbReference type="RefSeq" id="WP_024266007.1">
    <property type="nucleotide sequence ID" value="NC_002696.2"/>
</dbReference>
<dbReference type="SMR" id="P0CAV0"/>
<dbReference type="STRING" id="190650.CC_3755"/>
<dbReference type="EnsemblBacteria" id="AAK25717">
    <property type="protein sequence ID" value="AAK25717"/>
    <property type="gene ID" value="CC_3755"/>
</dbReference>
<dbReference type="KEGG" id="ccr:CC_3755"/>
<dbReference type="PATRIC" id="fig|190650.5.peg.3757"/>
<dbReference type="eggNOG" id="COG0445">
    <property type="taxonomic scope" value="Bacteria"/>
</dbReference>
<dbReference type="HOGENOM" id="CLU_007831_2_2_5"/>
<dbReference type="Proteomes" id="UP000001816">
    <property type="component" value="Chromosome"/>
</dbReference>
<dbReference type="GO" id="GO:0005829">
    <property type="term" value="C:cytosol"/>
    <property type="evidence" value="ECO:0007669"/>
    <property type="project" value="TreeGrafter"/>
</dbReference>
<dbReference type="GO" id="GO:0050660">
    <property type="term" value="F:flavin adenine dinucleotide binding"/>
    <property type="evidence" value="ECO:0007669"/>
    <property type="project" value="UniProtKB-UniRule"/>
</dbReference>
<dbReference type="GO" id="GO:0030488">
    <property type="term" value="P:tRNA methylation"/>
    <property type="evidence" value="ECO:0007669"/>
    <property type="project" value="TreeGrafter"/>
</dbReference>
<dbReference type="GO" id="GO:0002098">
    <property type="term" value="P:tRNA wobble uridine modification"/>
    <property type="evidence" value="ECO:0007669"/>
    <property type="project" value="InterPro"/>
</dbReference>
<dbReference type="FunFam" id="3.50.50.60:FF:000082">
    <property type="entry name" value="protein MTO1 homolog, mitochondrial isoform X1"/>
    <property type="match status" value="1"/>
</dbReference>
<dbReference type="FunFam" id="1.10.150.570:FF:000001">
    <property type="entry name" value="tRNA uridine 5-carboxymethylaminomethyl modification enzyme MnmG"/>
    <property type="match status" value="1"/>
</dbReference>
<dbReference type="FunFam" id="3.50.50.60:FF:000002">
    <property type="entry name" value="tRNA uridine 5-carboxymethylaminomethyl modification enzyme MnmG"/>
    <property type="match status" value="1"/>
</dbReference>
<dbReference type="Gene3D" id="3.50.50.60">
    <property type="entry name" value="FAD/NAD(P)-binding domain"/>
    <property type="match status" value="2"/>
</dbReference>
<dbReference type="Gene3D" id="1.10.150.570">
    <property type="entry name" value="GidA associated domain, C-terminal subdomain"/>
    <property type="match status" value="1"/>
</dbReference>
<dbReference type="Gene3D" id="1.10.10.1800">
    <property type="entry name" value="tRNA uridine 5-carboxymethylaminomethyl modification enzyme MnmG/GidA"/>
    <property type="match status" value="1"/>
</dbReference>
<dbReference type="HAMAP" id="MF_00129">
    <property type="entry name" value="MnmG_GidA"/>
    <property type="match status" value="1"/>
</dbReference>
<dbReference type="InterPro" id="IPR036188">
    <property type="entry name" value="FAD/NAD-bd_sf"/>
</dbReference>
<dbReference type="InterPro" id="IPR049312">
    <property type="entry name" value="GIDA_C_N"/>
</dbReference>
<dbReference type="InterPro" id="IPR004416">
    <property type="entry name" value="MnmG"/>
</dbReference>
<dbReference type="InterPro" id="IPR002218">
    <property type="entry name" value="MnmG-rel"/>
</dbReference>
<dbReference type="InterPro" id="IPR020595">
    <property type="entry name" value="MnmG-rel_CS"/>
</dbReference>
<dbReference type="InterPro" id="IPR026904">
    <property type="entry name" value="MnmG_C"/>
</dbReference>
<dbReference type="InterPro" id="IPR047001">
    <property type="entry name" value="MnmG_C_subdom"/>
</dbReference>
<dbReference type="InterPro" id="IPR044920">
    <property type="entry name" value="MnmG_C_subdom_sf"/>
</dbReference>
<dbReference type="InterPro" id="IPR040131">
    <property type="entry name" value="MnmG_N"/>
</dbReference>
<dbReference type="NCBIfam" id="TIGR00136">
    <property type="entry name" value="mnmG_gidA"/>
    <property type="match status" value="1"/>
</dbReference>
<dbReference type="PANTHER" id="PTHR11806">
    <property type="entry name" value="GLUCOSE INHIBITED DIVISION PROTEIN A"/>
    <property type="match status" value="1"/>
</dbReference>
<dbReference type="PANTHER" id="PTHR11806:SF0">
    <property type="entry name" value="PROTEIN MTO1 HOMOLOG, MITOCHONDRIAL"/>
    <property type="match status" value="1"/>
</dbReference>
<dbReference type="Pfam" id="PF01134">
    <property type="entry name" value="GIDA"/>
    <property type="match status" value="1"/>
</dbReference>
<dbReference type="Pfam" id="PF21680">
    <property type="entry name" value="GIDA_C_1st"/>
    <property type="match status" value="1"/>
</dbReference>
<dbReference type="Pfam" id="PF13932">
    <property type="entry name" value="SAM_GIDA_C"/>
    <property type="match status" value="1"/>
</dbReference>
<dbReference type="PRINTS" id="PR00411">
    <property type="entry name" value="PNDRDTASEI"/>
</dbReference>
<dbReference type="SMART" id="SM01228">
    <property type="entry name" value="GIDA_assoc_3"/>
    <property type="match status" value="1"/>
</dbReference>
<dbReference type="SUPFAM" id="SSF51905">
    <property type="entry name" value="FAD/NAD(P)-binding domain"/>
    <property type="match status" value="1"/>
</dbReference>
<dbReference type="PROSITE" id="PS01280">
    <property type="entry name" value="GIDA_1"/>
    <property type="match status" value="1"/>
</dbReference>
<dbReference type="PROSITE" id="PS01281">
    <property type="entry name" value="GIDA_2"/>
    <property type="match status" value="1"/>
</dbReference>
<reference key="1">
    <citation type="journal article" date="2001" name="Proc. Natl. Acad. Sci. U.S.A.">
        <title>Complete genome sequence of Caulobacter crescentus.</title>
        <authorList>
            <person name="Nierman W.C."/>
            <person name="Feldblyum T.V."/>
            <person name="Laub M.T."/>
            <person name="Paulsen I.T."/>
            <person name="Nelson K.E."/>
            <person name="Eisen J.A."/>
            <person name="Heidelberg J.F."/>
            <person name="Alley M.R.K."/>
            <person name="Ohta N."/>
            <person name="Maddock J.R."/>
            <person name="Potocka I."/>
            <person name="Nelson W.C."/>
            <person name="Newton A."/>
            <person name="Stephens C."/>
            <person name="Phadke N.D."/>
            <person name="Ely B."/>
            <person name="DeBoy R.T."/>
            <person name="Dodson R.J."/>
            <person name="Durkin A.S."/>
            <person name="Gwinn M.L."/>
            <person name="Haft D.H."/>
            <person name="Kolonay J.F."/>
            <person name="Smit J."/>
            <person name="Craven M.B."/>
            <person name="Khouri H.M."/>
            <person name="Shetty J."/>
            <person name="Berry K.J."/>
            <person name="Utterback T.R."/>
            <person name="Tran K."/>
            <person name="Wolf A.M."/>
            <person name="Vamathevan J.J."/>
            <person name="Ermolaeva M.D."/>
            <person name="White O."/>
            <person name="Salzberg S.L."/>
            <person name="Venter J.C."/>
            <person name="Shapiro L."/>
            <person name="Fraser C.M."/>
        </authorList>
    </citation>
    <scope>NUCLEOTIDE SEQUENCE [LARGE SCALE GENOMIC DNA]</scope>
    <source>
        <strain>ATCC 19089 / CIP 103742 / CB 15</strain>
    </source>
</reference>
<name>MNMG_CAUVC</name>
<gene>
    <name evidence="1" type="primary">mnmG</name>
    <name evidence="1" type="synonym">gidA</name>
    <name type="ordered locus">CC_3755</name>
</gene>
<accession>P0CAV0</accession>
<accession>Q9XBF8</accession>